<comment type="function">
    <text evidence="2">Binds with high affinity to muscular (alpha-1/CHRNA1) and neuronal (alpha-7/CHRNA7) nicotinic acetylcholine receptor (nAChR) and inhibits acetylcholine from binding to the receptor, thereby impairing neuromuscular and neuronal transmission.</text>
</comment>
<comment type="subcellular location">
    <subcellularLocation>
        <location evidence="3">Secreted</location>
    </subcellularLocation>
</comment>
<comment type="tissue specificity">
    <text evidence="4">Expressed by the venom gland.</text>
</comment>
<comment type="toxic dose">
    <text evidence="3">LD(50) is 0.38 mg/kg by subcutaneous injection.</text>
</comment>
<comment type="similarity">
    <text evidence="4">Belongs to the three-finger toxin family. Long-chain subfamily. Type II alpha-neurotoxin sub-subfamily.</text>
</comment>
<name>3L21_DENJA</name>
<evidence type="ECO:0000250" key="1"/>
<evidence type="ECO:0000250" key="2">
    <source>
        <dbReference type="UniProtKB" id="P60615"/>
    </source>
</evidence>
<evidence type="ECO:0000269" key="3">
    <source>
    </source>
</evidence>
<evidence type="ECO:0000305" key="4"/>
<accession>P01393</accession>
<sequence length="72" mass="8185">RTCYKTYSDKSKTCPRGEDICYTKTWCDGFCSQRGKRVELGCAATCPKVKTGVEIKCCSTDYCNPFPVWNPR</sequence>
<dbReference type="PIR" id="A01664">
    <property type="entry name" value="N2EP1J"/>
</dbReference>
<dbReference type="SMR" id="P01393"/>
<dbReference type="GO" id="GO:0005576">
    <property type="term" value="C:extracellular region"/>
    <property type="evidence" value="ECO:0007669"/>
    <property type="project" value="UniProtKB-SubCell"/>
</dbReference>
<dbReference type="GO" id="GO:0030550">
    <property type="term" value="F:acetylcholine receptor inhibitor activity"/>
    <property type="evidence" value="ECO:0007669"/>
    <property type="project" value="UniProtKB-KW"/>
</dbReference>
<dbReference type="GO" id="GO:0099106">
    <property type="term" value="F:ion channel regulator activity"/>
    <property type="evidence" value="ECO:0007669"/>
    <property type="project" value="UniProtKB-KW"/>
</dbReference>
<dbReference type="GO" id="GO:0090729">
    <property type="term" value="F:toxin activity"/>
    <property type="evidence" value="ECO:0007669"/>
    <property type="project" value="UniProtKB-KW"/>
</dbReference>
<dbReference type="CDD" id="cd00206">
    <property type="entry name" value="TFP_snake_toxin"/>
    <property type="match status" value="1"/>
</dbReference>
<dbReference type="Gene3D" id="2.10.60.10">
    <property type="entry name" value="CD59"/>
    <property type="match status" value="1"/>
</dbReference>
<dbReference type="InterPro" id="IPR003571">
    <property type="entry name" value="Snake_3FTx"/>
</dbReference>
<dbReference type="InterPro" id="IPR045860">
    <property type="entry name" value="Snake_toxin-like_sf"/>
</dbReference>
<dbReference type="InterPro" id="IPR018354">
    <property type="entry name" value="Snake_toxin_con_site"/>
</dbReference>
<dbReference type="InterPro" id="IPR054131">
    <property type="entry name" value="Toxin_cobra-type"/>
</dbReference>
<dbReference type="Pfam" id="PF21947">
    <property type="entry name" value="Toxin_cobra-type"/>
    <property type="match status" value="1"/>
</dbReference>
<dbReference type="SUPFAM" id="SSF57302">
    <property type="entry name" value="Snake toxin-like"/>
    <property type="match status" value="1"/>
</dbReference>
<dbReference type="PROSITE" id="PS00272">
    <property type="entry name" value="SNAKE_TOXIN"/>
    <property type="match status" value="1"/>
</dbReference>
<keyword id="KW-0008">Acetylcholine receptor inhibiting toxin</keyword>
<keyword id="KW-0903">Direct protein sequencing</keyword>
<keyword id="KW-1015">Disulfide bond</keyword>
<keyword id="KW-0872">Ion channel impairing toxin</keyword>
<keyword id="KW-0528">Neurotoxin</keyword>
<keyword id="KW-0629">Postsynaptic neurotoxin</keyword>
<keyword id="KW-0964">Secreted</keyword>
<keyword id="KW-0800">Toxin</keyword>
<protein>
    <recommendedName>
        <fullName>Alpha-elapitoxin-Djk2a</fullName>
        <shortName>Alpha-EPTX-Djk2a</shortName>
    </recommendedName>
    <alternativeName>
        <fullName>Long neurotoxin 1</fullName>
    </alternativeName>
    <alternativeName>
        <fullName>Toxin V-III-N1</fullName>
    </alternativeName>
</protein>
<organism>
    <name type="scientific">Dendroaspis jamesoni kaimosae</name>
    <name type="common">Eastern Jameson's mamba</name>
    <dbReference type="NCBI Taxonomy" id="8619"/>
    <lineage>
        <taxon>Eukaryota</taxon>
        <taxon>Metazoa</taxon>
        <taxon>Chordata</taxon>
        <taxon>Craniata</taxon>
        <taxon>Vertebrata</taxon>
        <taxon>Euteleostomi</taxon>
        <taxon>Lepidosauria</taxon>
        <taxon>Squamata</taxon>
        <taxon>Bifurcata</taxon>
        <taxon>Unidentata</taxon>
        <taxon>Episquamata</taxon>
        <taxon>Toxicofera</taxon>
        <taxon>Serpentes</taxon>
        <taxon>Colubroidea</taxon>
        <taxon>Elapidae</taxon>
        <taxon>Elapinae</taxon>
        <taxon>Dendroaspis</taxon>
    </lineage>
</organism>
<reference key="1">
    <citation type="journal article" date="1973" name="Biochim. Biophys. Acta">
        <title>Snake venom toxins. The amino acid sequences of two toxins from Dendroaspis jamesoni kaimosae (Jameson's mamba) venom.</title>
        <authorList>
            <person name="Strydom A.J.C."/>
        </authorList>
    </citation>
    <scope>PROTEIN SEQUENCE</scope>
    <scope>TOXIC DOSE</scope>
    <scope>SUBCELLULAR LOCATION</scope>
    <source>
        <tissue>Venom</tissue>
    </source>
</reference>
<reference key="2">
    <citation type="journal article" date="2013" name="Proc. Natl. Acad. Sci. U.S.A.">
        <title>The king cobra genome reveals dynamic gene evolution and adaptation in the snake venom system.</title>
        <authorList>
            <person name="Vonk F.J."/>
            <person name="Casewell N.R."/>
            <person name="Henkel C.V."/>
            <person name="Heimberg A.M."/>
            <person name="Jansen H.J."/>
            <person name="McCleary R.J."/>
            <person name="Kerkkamp H.M."/>
            <person name="Vos R.A."/>
            <person name="Guerreiro I."/>
            <person name="Calvete J.J."/>
            <person name="Wuster W."/>
            <person name="Woods A.E."/>
            <person name="Logan J.M."/>
            <person name="Harrison R.A."/>
            <person name="Castoe T.A."/>
            <person name="de Koning A.P."/>
            <person name="Pollock D.D."/>
            <person name="Yandell M."/>
            <person name="Calderon D."/>
            <person name="Renjifo C."/>
            <person name="Currier R.B."/>
            <person name="Salgado D."/>
            <person name="Pla D."/>
            <person name="Sanz L."/>
            <person name="Hyder A.S."/>
            <person name="Ribeiro J.M."/>
            <person name="Arntzen J.W."/>
            <person name="van den Thillart G.E."/>
            <person name="Boetzer M."/>
            <person name="Pirovano W."/>
            <person name="Dirks R.P."/>
            <person name="Spaink H.P."/>
            <person name="Duboule D."/>
            <person name="McGlinn E."/>
            <person name="Kini R.M."/>
            <person name="Richardson M.K."/>
        </authorList>
    </citation>
    <scope>IDENTIFICATION BY MASS SPECTROMETRY</scope>
    <source>
        <tissue>Venom</tissue>
    </source>
</reference>
<feature type="chain" id="PRO_0000093537" description="Alpha-elapitoxin-Djk2a">
    <location>
        <begin position="1"/>
        <end position="72"/>
    </location>
</feature>
<feature type="disulfide bond" evidence="1">
    <location>
        <begin position="3"/>
        <end position="21"/>
    </location>
</feature>
<feature type="disulfide bond" evidence="1">
    <location>
        <begin position="14"/>
        <end position="42"/>
    </location>
</feature>
<feature type="disulfide bond" evidence="1">
    <location>
        <begin position="27"/>
        <end position="31"/>
    </location>
</feature>
<feature type="disulfide bond" evidence="1">
    <location>
        <begin position="46"/>
        <end position="57"/>
    </location>
</feature>
<feature type="disulfide bond" evidence="1">
    <location>
        <begin position="58"/>
        <end position="63"/>
    </location>
</feature>
<proteinExistence type="evidence at protein level"/>